<sequence>MPELPEVELTRRRLERDITGKQVQQVLVRAPKLRLPVPPELEEALKGRTVRAVERRGKYLLLECEAGWLIVHLGMTGFLRLLHTPQLPGKHDHVDIVFTDGSVLRFHDPRKFGTIAWTTDSLDKHPLLAGIGPEPLTAAFSGAYLFRVSRTRRVVVKLLIMNMAIVAGVGNIYANEALFRAGIRPDRAASSLSRTECERLAVTIREVLQESIDLGSTYRVEEGTVTYHPLAFDVYGRGHGTCTSCGGALEAVRLGNRSTVFCPRCQQ</sequence>
<name>FPG_PELPD</name>
<keyword id="KW-0227">DNA damage</keyword>
<keyword id="KW-0234">DNA repair</keyword>
<keyword id="KW-0238">DNA-binding</keyword>
<keyword id="KW-0326">Glycosidase</keyword>
<keyword id="KW-0378">Hydrolase</keyword>
<keyword id="KW-0456">Lyase</keyword>
<keyword id="KW-0479">Metal-binding</keyword>
<keyword id="KW-0511">Multifunctional enzyme</keyword>
<keyword id="KW-1185">Reference proteome</keyword>
<keyword id="KW-0862">Zinc</keyword>
<keyword id="KW-0863">Zinc-finger</keyword>
<dbReference type="EC" id="3.2.2.23" evidence="2"/>
<dbReference type="EC" id="4.2.99.18" evidence="2"/>
<dbReference type="EMBL" id="CP000482">
    <property type="protein sequence ID" value="ABL01200.1"/>
    <property type="molecule type" value="Genomic_DNA"/>
</dbReference>
<dbReference type="RefSeq" id="WP_011737412.1">
    <property type="nucleotide sequence ID" value="NC_008609.1"/>
</dbReference>
<dbReference type="SMR" id="A1AV29"/>
<dbReference type="STRING" id="338966.Ppro_3608"/>
<dbReference type="KEGG" id="ppd:Ppro_3608"/>
<dbReference type="eggNOG" id="COG0266">
    <property type="taxonomic scope" value="Bacteria"/>
</dbReference>
<dbReference type="HOGENOM" id="CLU_038423_1_1_7"/>
<dbReference type="OrthoDB" id="9800855at2"/>
<dbReference type="Proteomes" id="UP000006732">
    <property type="component" value="Chromosome"/>
</dbReference>
<dbReference type="GO" id="GO:0034039">
    <property type="term" value="F:8-oxo-7,8-dihydroguanine DNA N-glycosylase activity"/>
    <property type="evidence" value="ECO:0007669"/>
    <property type="project" value="TreeGrafter"/>
</dbReference>
<dbReference type="GO" id="GO:0140078">
    <property type="term" value="F:class I DNA-(apurinic or apyrimidinic site) endonuclease activity"/>
    <property type="evidence" value="ECO:0007669"/>
    <property type="project" value="UniProtKB-EC"/>
</dbReference>
<dbReference type="GO" id="GO:0003684">
    <property type="term" value="F:damaged DNA binding"/>
    <property type="evidence" value="ECO:0007669"/>
    <property type="project" value="InterPro"/>
</dbReference>
<dbReference type="GO" id="GO:0008270">
    <property type="term" value="F:zinc ion binding"/>
    <property type="evidence" value="ECO:0007669"/>
    <property type="project" value="UniProtKB-UniRule"/>
</dbReference>
<dbReference type="GO" id="GO:0006284">
    <property type="term" value="P:base-excision repair"/>
    <property type="evidence" value="ECO:0007669"/>
    <property type="project" value="InterPro"/>
</dbReference>
<dbReference type="CDD" id="cd08966">
    <property type="entry name" value="EcFpg-like_N"/>
    <property type="match status" value="1"/>
</dbReference>
<dbReference type="FunFam" id="1.10.8.50:FF:000003">
    <property type="entry name" value="Formamidopyrimidine-DNA glycosylase"/>
    <property type="match status" value="1"/>
</dbReference>
<dbReference type="FunFam" id="3.20.190.10:FF:000001">
    <property type="entry name" value="Formamidopyrimidine-DNA glycosylase"/>
    <property type="match status" value="1"/>
</dbReference>
<dbReference type="Gene3D" id="1.10.8.50">
    <property type="match status" value="1"/>
</dbReference>
<dbReference type="Gene3D" id="3.20.190.10">
    <property type="entry name" value="MutM-like, N-terminal"/>
    <property type="match status" value="1"/>
</dbReference>
<dbReference type="HAMAP" id="MF_00103">
    <property type="entry name" value="Fapy_DNA_glycosyl"/>
    <property type="match status" value="1"/>
</dbReference>
<dbReference type="InterPro" id="IPR015886">
    <property type="entry name" value="DNA_glyclase/AP_lyase_DNA-bd"/>
</dbReference>
<dbReference type="InterPro" id="IPR015887">
    <property type="entry name" value="DNA_glyclase_Znf_dom_DNA_BS"/>
</dbReference>
<dbReference type="InterPro" id="IPR020629">
    <property type="entry name" value="Formamido-pyr_DNA_Glyclase"/>
</dbReference>
<dbReference type="InterPro" id="IPR012319">
    <property type="entry name" value="FPG_cat"/>
</dbReference>
<dbReference type="InterPro" id="IPR035937">
    <property type="entry name" value="MutM-like_N-ter"/>
</dbReference>
<dbReference type="InterPro" id="IPR010979">
    <property type="entry name" value="Ribosomal_uS13-like_H2TH"/>
</dbReference>
<dbReference type="InterPro" id="IPR000214">
    <property type="entry name" value="Znf_DNA_glyclase/AP_lyase"/>
</dbReference>
<dbReference type="InterPro" id="IPR010663">
    <property type="entry name" value="Znf_FPG/IleRS"/>
</dbReference>
<dbReference type="NCBIfam" id="TIGR00577">
    <property type="entry name" value="fpg"/>
    <property type="match status" value="1"/>
</dbReference>
<dbReference type="NCBIfam" id="NF002211">
    <property type="entry name" value="PRK01103.1"/>
    <property type="match status" value="1"/>
</dbReference>
<dbReference type="PANTHER" id="PTHR22993">
    <property type="entry name" value="FORMAMIDOPYRIMIDINE-DNA GLYCOSYLASE"/>
    <property type="match status" value="1"/>
</dbReference>
<dbReference type="PANTHER" id="PTHR22993:SF9">
    <property type="entry name" value="FORMAMIDOPYRIMIDINE-DNA GLYCOSYLASE"/>
    <property type="match status" value="1"/>
</dbReference>
<dbReference type="Pfam" id="PF01149">
    <property type="entry name" value="Fapy_DNA_glyco"/>
    <property type="match status" value="1"/>
</dbReference>
<dbReference type="Pfam" id="PF06831">
    <property type="entry name" value="H2TH"/>
    <property type="match status" value="1"/>
</dbReference>
<dbReference type="Pfam" id="PF06827">
    <property type="entry name" value="zf-FPG_IleRS"/>
    <property type="match status" value="1"/>
</dbReference>
<dbReference type="SMART" id="SM00898">
    <property type="entry name" value="Fapy_DNA_glyco"/>
    <property type="match status" value="1"/>
</dbReference>
<dbReference type="SMART" id="SM01232">
    <property type="entry name" value="H2TH"/>
    <property type="match status" value="1"/>
</dbReference>
<dbReference type="SUPFAM" id="SSF57716">
    <property type="entry name" value="Glucocorticoid receptor-like (DNA-binding domain)"/>
    <property type="match status" value="1"/>
</dbReference>
<dbReference type="SUPFAM" id="SSF81624">
    <property type="entry name" value="N-terminal domain of MutM-like DNA repair proteins"/>
    <property type="match status" value="1"/>
</dbReference>
<dbReference type="SUPFAM" id="SSF46946">
    <property type="entry name" value="S13-like H2TH domain"/>
    <property type="match status" value="1"/>
</dbReference>
<dbReference type="PROSITE" id="PS51068">
    <property type="entry name" value="FPG_CAT"/>
    <property type="match status" value="1"/>
</dbReference>
<dbReference type="PROSITE" id="PS01242">
    <property type="entry name" value="ZF_FPG_1"/>
    <property type="match status" value="1"/>
</dbReference>
<dbReference type="PROSITE" id="PS51066">
    <property type="entry name" value="ZF_FPG_2"/>
    <property type="match status" value="1"/>
</dbReference>
<reference key="1">
    <citation type="submission" date="2006-10" db="EMBL/GenBank/DDBJ databases">
        <title>Complete sequence of chromosome of Pelobacter propionicus DSM 2379.</title>
        <authorList>
            <consortium name="US DOE Joint Genome Institute"/>
            <person name="Copeland A."/>
            <person name="Lucas S."/>
            <person name="Lapidus A."/>
            <person name="Barry K."/>
            <person name="Detter J.C."/>
            <person name="Glavina del Rio T."/>
            <person name="Hammon N."/>
            <person name="Israni S."/>
            <person name="Dalin E."/>
            <person name="Tice H."/>
            <person name="Pitluck S."/>
            <person name="Saunders E."/>
            <person name="Brettin T."/>
            <person name="Bruce D."/>
            <person name="Han C."/>
            <person name="Tapia R."/>
            <person name="Schmutz J."/>
            <person name="Larimer F."/>
            <person name="Land M."/>
            <person name="Hauser L."/>
            <person name="Kyrpides N."/>
            <person name="Kim E."/>
            <person name="Lovley D."/>
            <person name="Richardson P."/>
        </authorList>
    </citation>
    <scope>NUCLEOTIDE SEQUENCE [LARGE SCALE GENOMIC DNA]</scope>
    <source>
        <strain>DSM 2379 / NBRC 103807 / OttBd1</strain>
    </source>
</reference>
<feature type="initiator methionine" description="Removed" evidence="1">
    <location>
        <position position="1"/>
    </location>
</feature>
<feature type="chain" id="PRO_1000008732" description="Formamidopyrimidine-DNA glycosylase">
    <location>
        <begin position="2"/>
        <end position="267"/>
    </location>
</feature>
<feature type="zinc finger region" description="FPG-type" evidence="2">
    <location>
        <begin position="233"/>
        <end position="267"/>
    </location>
</feature>
<feature type="active site" description="Schiff-base intermediate with DNA" evidence="2">
    <location>
        <position position="2"/>
    </location>
</feature>
<feature type="active site" description="Proton donor" evidence="2">
    <location>
        <position position="3"/>
    </location>
</feature>
<feature type="active site" description="Proton donor; for beta-elimination activity" evidence="2">
    <location>
        <position position="58"/>
    </location>
</feature>
<feature type="active site" description="Proton donor; for delta-elimination activity" evidence="2">
    <location>
        <position position="257"/>
    </location>
</feature>
<feature type="binding site" evidence="2">
    <location>
        <position position="91"/>
    </location>
    <ligand>
        <name>DNA</name>
        <dbReference type="ChEBI" id="CHEBI:16991"/>
    </ligand>
</feature>
<feature type="binding site" evidence="2">
    <location>
        <position position="110"/>
    </location>
    <ligand>
        <name>DNA</name>
        <dbReference type="ChEBI" id="CHEBI:16991"/>
    </ligand>
</feature>
<feature type="binding site" evidence="2">
    <location>
        <position position="152"/>
    </location>
    <ligand>
        <name>DNA</name>
        <dbReference type="ChEBI" id="CHEBI:16991"/>
    </ligand>
</feature>
<evidence type="ECO:0000250" key="1"/>
<evidence type="ECO:0000255" key="2">
    <source>
        <dbReference type="HAMAP-Rule" id="MF_00103"/>
    </source>
</evidence>
<protein>
    <recommendedName>
        <fullName evidence="2">Formamidopyrimidine-DNA glycosylase</fullName>
        <shortName evidence="2">Fapy-DNA glycosylase</shortName>
        <ecNumber evidence="2">3.2.2.23</ecNumber>
    </recommendedName>
    <alternativeName>
        <fullName evidence="2">DNA-(apurinic or apyrimidinic site) lyase MutM</fullName>
        <shortName evidence="2">AP lyase MutM</shortName>
        <ecNumber evidence="2">4.2.99.18</ecNumber>
    </alternativeName>
</protein>
<comment type="function">
    <text evidence="2">Involved in base excision repair of DNA damaged by oxidation or by mutagenic agents. Acts as a DNA glycosylase that recognizes and removes damaged bases. Has a preference for oxidized purines, such as 7,8-dihydro-8-oxoguanine (8-oxoG). Has AP (apurinic/apyrimidinic) lyase activity and introduces nicks in the DNA strand. Cleaves the DNA backbone by beta-delta elimination to generate a single-strand break at the site of the removed base with both 3'- and 5'-phosphates.</text>
</comment>
<comment type="catalytic activity">
    <reaction evidence="2">
        <text>Hydrolysis of DNA containing ring-opened 7-methylguanine residues, releasing 2,6-diamino-4-hydroxy-5-(N-methyl)formamidopyrimidine.</text>
        <dbReference type="EC" id="3.2.2.23"/>
    </reaction>
</comment>
<comment type="catalytic activity">
    <reaction evidence="2">
        <text>2'-deoxyribonucleotide-(2'-deoxyribose 5'-phosphate)-2'-deoxyribonucleotide-DNA = a 3'-end 2'-deoxyribonucleotide-(2,3-dehydro-2,3-deoxyribose 5'-phosphate)-DNA + a 5'-end 5'-phospho-2'-deoxyribonucleoside-DNA + H(+)</text>
        <dbReference type="Rhea" id="RHEA:66592"/>
        <dbReference type="Rhea" id="RHEA-COMP:13180"/>
        <dbReference type="Rhea" id="RHEA-COMP:16897"/>
        <dbReference type="Rhea" id="RHEA-COMP:17067"/>
        <dbReference type="ChEBI" id="CHEBI:15378"/>
        <dbReference type="ChEBI" id="CHEBI:136412"/>
        <dbReference type="ChEBI" id="CHEBI:157695"/>
        <dbReference type="ChEBI" id="CHEBI:167181"/>
        <dbReference type="EC" id="4.2.99.18"/>
    </reaction>
</comment>
<comment type="cofactor">
    <cofactor evidence="2">
        <name>Zn(2+)</name>
        <dbReference type="ChEBI" id="CHEBI:29105"/>
    </cofactor>
    <text evidence="2">Binds 1 zinc ion per subunit.</text>
</comment>
<comment type="subunit">
    <text evidence="2">Monomer.</text>
</comment>
<comment type="similarity">
    <text evidence="2">Belongs to the FPG family.</text>
</comment>
<gene>
    <name evidence="2" type="primary">mutM</name>
    <name evidence="2" type="synonym">fpg</name>
    <name type="ordered locus">Ppro_3608</name>
</gene>
<accession>A1AV29</accession>
<organism>
    <name type="scientific">Pelobacter propionicus (strain DSM 2379 / NBRC 103807 / OttBd1)</name>
    <dbReference type="NCBI Taxonomy" id="338966"/>
    <lineage>
        <taxon>Bacteria</taxon>
        <taxon>Pseudomonadati</taxon>
        <taxon>Thermodesulfobacteriota</taxon>
        <taxon>Desulfuromonadia</taxon>
        <taxon>Desulfuromonadales</taxon>
        <taxon>Desulfuromonadaceae</taxon>
        <taxon>Pelobacter</taxon>
    </lineage>
</organism>
<proteinExistence type="inferred from homology"/>